<reference key="1">
    <citation type="submission" date="2007-11" db="EMBL/GenBank/DDBJ databases">
        <authorList>
            <consortium name="The Salmonella enterica serovar Paratyphi B Genome Sequencing Project"/>
            <person name="McClelland M."/>
            <person name="Sanderson E.K."/>
            <person name="Porwollik S."/>
            <person name="Spieth J."/>
            <person name="Clifton W.S."/>
            <person name="Fulton R."/>
            <person name="Cordes M."/>
            <person name="Wollam A."/>
            <person name="Shah N."/>
            <person name="Pepin K."/>
            <person name="Bhonagiri V."/>
            <person name="Nash W."/>
            <person name="Johnson M."/>
            <person name="Thiruvilangam P."/>
            <person name="Wilson R."/>
        </authorList>
    </citation>
    <scope>NUCLEOTIDE SEQUENCE [LARGE SCALE GENOMIC DNA]</scope>
    <source>
        <strain>ATCC BAA-1250 / SPB7</strain>
    </source>
</reference>
<dbReference type="EC" id="2.7.8.20" evidence="1"/>
<dbReference type="EMBL" id="CP000886">
    <property type="protein sequence ID" value="ABX70982.1"/>
    <property type="molecule type" value="Genomic_DNA"/>
</dbReference>
<dbReference type="RefSeq" id="WP_001292709.1">
    <property type="nucleotide sequence ID" value="NC_010102.1"/>
</dbReference>
<dbReference type="SMR" id="A9N7A9"/>
<dbReference type="KEGG" id="spq:SPAB_05714"/>
<dbReference type="PATRIC" id="fig|1016998.12.peg.5358"/>
<dbReference type="HOGENOM" id="CLU_023986_1_0_6"/>
<dbReference type="BioCyc" id="SENT1016998:SPAB_RS23320-MONOMER"/>
<dbReference type="UniPathway" id="UPA00637"/>
<dbReference type="Proteomes" id="UP000008556">
    <property type="component" value="Chromosome"/>
</dbReference>
<dbReference type="GO" id="GO:0005886">
    <property type="term" value="C:plasma membrane"/>
    <property type="evidence" value="ECO:0007669"/>
    <property type="project" value="UniProtKB-SubCell"/>
</dbReference>
<dbReference type="GO" id="GO:0008960">
    <property type="term" value="F:phosphatidylglycerol-membrane-oligosaccharide glycerophosphotransferase activity"/>
    <property type="evidence" value="ECO:0007669"/>
    <property type="project" value="UniProtKB-UniRule"/>
</dbReference>
<dbReference type="GO" id="GO:0009250">
    <property type="term" value="P:glucan biosynthetic process"/>
    <property type="evidence" value="ECO:0007669"/>
    <property type="project" value="UniProtKB-UniRule"/>
</dbReference>
<dbReference type="CDD" id="cd16015">
    <property type="entry name" value="LTA_synthase"/>
    <property type="match status" value="1"/>
</dbReference>
<dbReference type="FunFam" id="3.40.720.10:FF:000009">
    <property type="entry name" value="Phosphoglycerol transferase I"/>
    <property type="match status" value="1"/>
</dbReference>
<dbReference type="Gene3D" id="3.40.720.10">
    <property type="entry name" value="Alkaline Phosphatase, subunit A"/>
    <property type="match status" value="1"/>
</dbReference>
<dbReference type="HAMAP" id="MF_01070">
    <property type="entry name" value="MdoB_OpgB"/>
    <property type="match status" value="1"/>
</dbReference>
<dbReference type="InterPro" id="IPR017850">
    <property type="entry name" value="Alkaline_phosphatase_core_sf"/>
</dbReference>
<dbReference type="InterPro" id="IPR054288">
    <property type="entry name" value="DUF7024"/>
</dbReference>
<dbReference type="InterPro" id="IPR020881">
    <property type="entry name" value="OpgB"/>
</dbReference>
<dbReference type="InterPro" id="IPR050448">
    <property type="entry name" value="OpgB/LTA_synthase_biosynth"/>
</dbReference>
<dbReference type="InterPro" id="IPR000917">
    <property type="entry name" value="Sulfatase_N"/>
</dbReference>
<dbReference type="NCBIfam" id="NF003000">
    <property type="entry name" value="PRK03776.1"/>
    <property type="match status" value="1"/>
</dbReference>
<dbReference type="PANTHER" id="PTHR47371">
    <property type="entry name" value="LIPOTEICHOIC ACID SYNTHASE"/>
    <property type="match status" value="1"/>
</dbReference>
<dbReference type="PANTHER" id="PTHR47371:SF3">
    <property type="entry name" value="PHOSPHOGLYCEROL TRANSFERASE I"/>
    <property type="match status" value="1"/>
</dbReference>
<dbReference type="Pfam" id="PF22895">
    <property type="entry name" value="DUF7024"/>
    <property type="match status" value="1"/>
</dbReference>
<dbReference type="Pfam" id="PF00884">
    <property type="entry name" value="Sulfatase"/>
    <property type="match status" value="1"/>
</dbReference>
<dbReference type="SUPFAM" id="SSF53649">
    <property type="entry name" value="Alkaline phosphatase-like"/>
    <property type="match status" value="1"/>
</dbReference>
<feature type="chain" id="PRO_1000084495" description="Phosphoglycerol transferase I">
    <location>
        <begin position="1"/>
        <end position="763"/>
    </location>
</feature>
<feature type="transmembrane region" description="Helical" evidence="1">
    <location>
        <begin position="1"/>
        <end position="21"/>
    </location>
</feature>
<feature type="transmembrane region" description="Helical" evidence="1">
    <location>
        <begin position="26"/>
        <end position="46"/>
    </location>
</feature>
<feature type="transmembrane region" description="Helical" evidence="1">
    <location>
        <begin position="77"/>
        <end position="97"/>
    </location>
</feature>
<feature type="transmembrane region" description="Helical" evidence="1">
    <location>
        <begin position="108"/>
        <end position="128"/>
    </location>
</feature>
<organism>
    <name type="scientific">Salmonella paratyphi B (strain ATCC BAA-1250 / SPB7)</name>
    <dbReference type="NCBI Taxonomy" id="1016998"/>
    <lineage>
        <taxon>Bacteria</taxon>
        <taxon>Pseudomonadati</taxon>
        <taxon>Pseudomonadota</taxon>
        <taxon>Gammaproteobacteria</taxon>
        <taxon>Enterobacterales</taxon>
        <taxon>Enterobacteriaceae</taxon>
        <taxon>Salmonella</taxon>
    </lineage>
</organism>
<gene>
    <name evidence="1" type="primary">mdoB</name>
    <name evidence="1" type="synonym">opgB</name>
    <name type="ordered locus">SPAB_05714</name>
</gene>
<evidence type="ECO:0000255" key="1">
    <source>
        <dbReference type="HAMAP-Rule" id="MF_01070"/>
    </source>
</evidence>
<accession>A9N7A9</accession>
<comment type="function">
    <text evidence="1">Transfers a phosphoglycerol residue from phosphatidylglycerol to the membrane-bound nascent glucan backbones.</text>
</comment>
<comment type="catalytic activity">
    <reaction evidence="1">
        <text>a phosphatidylglycerol + a membrane-derived-oligosaccharide D-glucose = a 1,2-diacyl-sn-glycerol + a membrane-derived-oligosaccharide 6-(glycerophospho)-D-glucose.</text>
        <dbReference type="EC" id="2.7.8.20"/>
    </reaction>
</comment>
<comment type="pathway">
    <text evidence="1">Glycan metabolism; osmoregulated periplasmic glucan (OPG) biosynthesis.</text>
</comment>
<comment type="subcellular location">
    <subcellularLocation>
        <location evidence="1">Cell inner membrane</location>
        <topology evidence="1">Multi-pass membrane protein</topology>
    </subcellularLocation>
</comment>
<comment type="similarity">
    <text evidence="1">Belongs to the OpgB family.</text>
</comment>
<sequence>MSELLSVALFLASVLIYAWKAGRNTWWFAATLTVLGLFVILNITLYASDYFTGDGINDAVLYTLTNSLTGAGVGKYILPGIGIALALVAVFGALGWILRRRRHHPHHVGYSLLALLLALGSVDASPAFRQITELVKSQMRDGDPDFAVYYKEPAKTIPNPKLNLVYIYGESLERTYFDNDAFPNLTPELGALKNEGLDFSHTMQLPGTDYTIAGMVASQCGIPLFAPFEGNASASVSSFFPQNICLGDILKNSGYQNYFVQGANLRFAGKDVFLKSHGFDHLYGAEELKTVVADPSYRNDWGFYDDTVLDEAWKKFEALSRSGQRFSLFTLTVDTHHPDGFISRTCNRKRYDYDGKPNQSFSAVSCSQENIAEFINKIKASPWFKDTVIVVSSDHLAMNNTAWKYLNKQDRNNLFFILRGDKPQQETLAVKRNTMDNGATVLDILGGDNFIGLGRSSLSGQSLSEVFLNVKEKVLAMKPDIIRLWNFPKEIKDFTVDRDKNMIAFSGSHFRLPLLLRVSDKRVEPLPESEYSAPLRFQLADFAPRDNFVWIDRCYKMAQLWAPALALSTDWCVSQGQLGGQQTVQHVDKAQWKGKTAFKETVIDVTRYQGNVDTLKIVDNDIRYKADSFIFNVAGAPEEVKQFSGISRPESWGRWSNAQLGDEVKIEYKAPLPKKFDLVITAKAFGDNANRPIPVRVGNEEQTLVLGHDVSTITLHFNNPTDANTLVIAPPAPVSTNEGNILGHSPRKLGIGMVEIKVVNVES</sequence>
<proteinExistence type="inferred from homology"/>
<protein>
    <recommendedName>
        <fullName evidence="1">Phosphoglycerol transferase I</fullName>
        <ecNumber evidence="1">2.7.8.20</ecNumber>
    </recommendedName>
    <alternativeName>
        <fullName evidence="1">Phosphatidylglycerol--membrane-oligosaccharide glycerophosphotransferase</fullName>
    </alternativeName>
</protein>
<keyword id="KW-0997">Cell inner membrane</keyword>
<keyword id="KW-1003">Cell membrane</keyword>
<keyword id="KW-0472">Membrane</keyword>
<keyword id="KW-0808">Transferase</keyword>
<keyword id="KW-0812">Transmembrane</keyword>
<keyword id="KW-1133">Transmembrane helix</keyword>
<name>OPGB_SALPB</name>